<accession>Q9H3U5</accession>
<accession>B4DGJ8</accession>
<accession>B4DMR8</accession>
<accession>B4DU49</accession>
<accession>B4DWU1</accession>
<accession>C9JS94</accession>
<accession>J3KQL7</accession>
<accession>Q05C07</accession>
<accession>Q5XKJ1</accession>
<accession>Q8IVS1</accession>
<accession>Q8IXG4</accession>
<accession>Q9H7X1</accession>
<reference key="1">
    <citation type="submission" date="1998-05" db="EMBL/GenBank/DDBJ databases">
        <title>Molecular cloning and characterization of human smooth muscle cell associated protein-4 (SMAP-4).</title>
        <authorList>
            <person name="Nishimoto S."/>
            <person name="Toyoda H."/>
            <person name="Tawara J."/>
            <person name="Aoki T."/>
            <person name="Komurasaki T."/>
        </authorList>
    </citation>
    <scope>NUCLEOTIDE SEQUENCE [MRNA] (ISOFORM 1)</scope>
    <source>
        <tissue>Heart</tissue>
    </source>
</reference>
<reference key="2">
    <citation type="submission" date="2003-11" db="EMBL/GenBank/DDBJ databases">
        <title>Isolation of full-length cDNA clones from human fetal brain cDNA library.</title>
        <authorList>
            <person name="Mao Y."/>
            <person name="Xie Y."/>
        </authorList>
    </citation>
    <scope>NUCLEOTIDE SEQUENCE [LARGE SCALE MRNA] (ISOFORM 1)</scope>
    <source>
        <tissue>Fetal brain</tissue>
    </source>
</reference>
<reference key="3">
    <citation type="journal article" date="2004" name="Nat. Genet.">
        <title>Complete sequencing and characterization of 21,243 full-length human cDNAs.</title>
        <authorList>
            <person name="Ota T."/>
            <person name="Suzuki Y."/>
            <person name="Nishikawa T."/>
            <person name="Otsuki T."/>
            <person name="Sugiyama T."/>
            <person name="Irie R."/>
            <person name="Wakamatsu A."/>
            <person name="Hayashi K."/>
            <person name="Sato H."/>
            <person name="Nagai K."/>
            <person name="Kimura K."/>
            <person name="Makita H."/>
            <person name="Sekine M."/>
            <person name="Obayashi M."/>
            <person name="Nishi T."/>
            <person name="Shibahara T."/>
            <person name="Tanaka T."/>
            <person name="Ishii S."/>
            <person name="Yamamoto J."/>
            <person name="Saito K."/>
            <person name="Kawai Y."/>
            <person name="Isono Y."/>
            <person name="Nakamura Y."/>
            <person name="Nagahari K."/>
            <person name="Murakami K."/>
            <person name="Yasuda T."/>
            <person name="Iwayanagi T."/>
            <person name="Wagatsuma M."/>
            <person name="Shiratori A."/>
            <person name="Sudo H."/>
            <person name="Hosoiri T."/>
            <person name="Kaku Y."/>
            <person name="Kodaira H."/>
            <person name="Kondo H."/>
            <person name="Sugawara M."/>
            <person name="Takahashi M."/>
            <person name="Kanda K."/>
            <person name="Yokoi T."/>
            <person name="Furuya T."/>
            <person name="Kikkawa E."/>
            <person name="Omura Y."/>
            <person name="Abe K."/>
            <person name="Kamihara K."/>
            <person name="Katsuta N."/>
            <person name="Sato K."/>
            <person name="Tanikawa M."/>
            <person name="Yamazaki M."/>
            <person name="Ninomiya K."/>
            <person name="Ishibashi T."/>
            <person name="Yamashita H."/>
            <person name="Murakawa K."/>
            <person name="Fujimori K."/>
            <person name="Tanai H."/>
            <person name="Kimata M."/>
            <person name="Watanabe M."/>
            <person name="Hiraoka S."/>
            <person name="Chiba Y."/>
            <person name="Ishida S."/>
            <person name="Ono Y."/>
            <person name="Takiguchi S."/>
            <person name="Watanabe S."/>
            <person name="Yosida M."/>
            <person name="Hotuta T."/>
            <person name="Kusano J."/>
            <person name="Kanehori K."/>
            <person name="Takahashi-Fujii A."/>
            <person name="Hara H."/>
            <person name="Tanase T.-O."/>
            <person name="Nomura Y."/>
            <person name="Togiya S."/>
            <person name="Komai F."/>
            <person name="Hara R."/>
            <person name="Takeuchi K."/>
            <person name="Arita M."/>
            <person name="Imose N."/>
            <person name="Musashino K."/>
            <person name="Yuuki H."/>
            <person name="Oshima A."/>
            <person name="Sasaki N."/>
            <person name="Aotsuka S."/>
            <person name="Yoshikawa Y."/>
            <person name="Matsunawa H."/>
            <person name="Ichihara T."/>
            <person name="Shiohata N."/>
            <person name="Sano S."/>
            <person name="Moriya S."/>
            <person name="Momiyama H."/>
            <person name="Satoh N."/>
            <person name="Takami S."/>
            <person name="Terashima Y."/>
            <person name="Suzuki O."/>
            <person name="Nakagawa S."/>
            <person name="Senoh A."/>
            <person name="Mizoguchi H."/>
            <person name="Goto Y."/>
            <person name="Shimizu F."/>
            <person name="Wakebe H."/>
            <person name="Hishigaki H."/>
            <person name="Watanabe T."/>
            <person name="Sugiyama A."/>
            <person name="Takemoto M."/>
            <person name="Kawakami B."/>
            <person name="Yamazaki M."/>
            <person name="Watanabe K."/>
            <person name="Kumagai A."/>
            <person name="Itakura S."/>
            <person name="Fukuzumi Y."/>
            <person name="Fujimori Y."/>
            <person name="Komiyama M."/>
            <person name="Tashiro H."/>
            <person name="Tanigami A."/>
            <person name="Fujiwara T."/>
            <person name="Ono T."/>
            <person name="Yamada K."/>
            <person name="Fujii Y."/>
            <person name="Ozaki K."/>
            <person name="Hirao M."/>
            <person name="Ohmori Y."/>
            <person name="Kawabata A."/>
            <person name="Hikiji T."/>
            <person name="Kobatake N."/>
            <person name="Inagaki H."/>
            <person name="Ikema Y."/>
            <person name="Okamoto S."/>
            <person name="Okitani R."/>
            <person name="Kawakami T."/>
            <person name="Noguchi S."/>
            <person name="Itoh T."/>
            <person name="Shigeta K."/>
            <person name="Senba T."/>
            <person name="Matsumura K."/>
            <person name="Nakajima Y."/>
            <person name="Mizuno T."/>
            <person name="Morinaga M."/>
            <person name="Sasaki M."/>
            <person name="Togashi T."/>
            <person name="Oyama M."/>
            <person name="Hata H."/>
            <person name="Watanabe M."/>
            <person name="Komatsu T."/>
            <person name="Mizushima-Sugano J."/>
            <person name="Satoh T."/>
            <person name="Shirai Y."/>
            <person name="Takahashi Y."/>
            <person name="Nakagawa K."/>
            <person name="Okumura K."/>
            <person name="Nagase T."/>
            <person name="Nomura N."/>
            <person name="Kikuchi H."/>
            <person name="Masuho Y."/>
            <person name="Yamashita R."/>
            <person name="Nakai K."/>
            <person name="Yada T."/>
            <person name="Nakamura Y."/>
            <person name="Ohara O."/>
            <person name="Isogai T."/>
            <person name="Sugano S."/>
        </authorList>
    </citation>
    <scope>NUCLEOTIDE SEQUENCE [LARGE SCALE MRNA] (ISOFORMS 1; 2; 3 AND 4)</scope>
    <scope>VARIANTS SER-24 AND VAL-220</scope>
    <source>
        <tissue>Brain</tissue>
        <tissue>Esophagus</tissue>
        <tissue>Prostate</tissue>
    </source>
</reference>
<reference key="4">
    <citation type="journal article" date="2004" name="Genome Res.">
        <title>The status, quality, and expansion of the NIH full-length cDNA project: the Mammalian Gene Collection (MGC).</title>
        <authorList>
            <consortium name="The MGC Project Team"/>
        </authorList>
    </citation>
    <scope>NUCLEOTIDE SEQUENCE [LARGE SCALE MRNA] (ISOFORMS 1 AND 2)</scope>
    <scope>VARIANTS GLU-168 AND VAL-220</scope>
    <source>
        <tissue>Brain</tissue>
        <tissue>Duodenum</tissue>
        <tissue>Lung</tissue>
    </source>
</reference>
<reference key="5">
    <citation type="journal article" date="2019" name="Elife">
        <title>A conserved major facilitator superfamily member orchestrates a subset of O-glycosylation to aid macrophage tissue invasion.</title>
        <authorList>
            <person name="Valoskova K."/>
            <person name="Biebl J."/>
            <person name="Roblek M."/>
            <person name="Emtenani S."/>
            <person name="Gyoergy A."/>
            <person name="Misova M."/>
            <person name="Ratheesh A."/>
            <person name="Reis-Rodrigues P."/>
            <person name="Shkarina K."/>
            <person name="Larsen I.S.B."/>
            <person name="Vakhrushev S.Y."/>
            <person name="Clausen H."/>
            <person name="Siekhaus D.E."/>
        </authorList>
    </citation>
    <scope>FUNCTION</scope>
    <scope>SUBCELLULAR LOCATION</scope>
</reference>
<reference key="6">
    <citation type="journal article" date="2024" name="Proc. Natl. Acad. Sci. U.S.A.">
        <title>Orphan lysosomal solute carrier MFSD1 facilitates highly selective dipeptide transport.</title>
        <authorList>
            <person name="Boytsov D."/>
            <person name="Madej G.M."/>
            <person name="Horn G."/>
            <person name="Blaha N."/>
            <person name="Koecher T."/>
            <person name="Sitte H.H."/>
            <person name="Siekhaus D."/>
            <person name="Ziegler C."/>
            <person name="Sandtner W."/>
            <person name="Roblek M."/>
        </authorList>
    </citation>
    <scope>FUNCTION</scope>
    <scope>TRANSPORTER ACTIVITY</scope>
    <scope>SUBSTRATE SPECIFICITY</scope>
    <scope>BIOPHYSICOCHEMICAL PROPERTIES</scope>
    <scope>SUBCELLULAR LOCATION</scope>
    <scope>MOTIF</scope>
    <scope>MUTAGENESIS OF 11-LEU-LEU-12</scope>
</reference>
<gene>
    <name evidence="13" type="primary">MFSD1</name>
    <name evidence="10" type="synonym">SMAP4</name>
    <name type="ORF">UG0581B09</name>
</gene>
<name>MFSD1_HUMAN</name>
<comment type="function">
    <text evidence="1 6 7">Lysosomal dipeptide uniporter that selectively exports lysine, arginine or histidine-containing dipeptides with a net positive charge from the lysosome lumen into the cytosol (PubMed:38507452). Could play a role in a specific type of protein O-glycosylation indirectly regulating macrophages migration and tissue invasion (PubMed:30910009). Also essential for liver homeostasis (By similarity).</text>
</comment>
<comment type="catalytic activity">
    <reaction evidence="7">
        <text>L-alpha-aminoacyl-L-arginine(out) = L-alpha-aminoacyl-L-arginine(in)</text>
        <dbReference type="Rhea" id="RHEA:79367"/>
        <dbReference type="ChEBI" id="CHEBI:229968"/>
    </reaction>
</comment>
<comment type="catalytic activity">
    <reaction evidence="7">
        <text>L-arginyl-L-alpha-amino acid(out) = L-arginyl-L-alpha-amino acid(in)</text>
        <dbReference type="Rhea" id="RHEA:79371"/>
        <dbReference type="ChEBI" id="CHEBI:84315"/>
    </reaction>
</comment>
<comment type="catalytic activity">
    <reaction evidence="7">
        <text>L-arginyl-glycine(out) = L-arginyl-glycine(in)</text>
        <dbReference type="Rhea" id="RHEA:79391"/>
        <dbReference type="ChEBI" id="CHEBI:229955"/>
    </reaction>
</comment>
<comment type="catalytic activity">
    <reaction evidence="7">
        <text>L-alpha-aminoacyl-L-lysine(out) = L-alpha-aminoacyl-L-lysine(in)</text>
        <dbReference type="Rhea" id="RHEA:79383"/>
        <dbReference type="ChEBI" id="CHEBI:229966"/>
    </reaction>
</comment>
<comment type="catalytic activity">
    <reaction evidence="7">
        <text>L-aspartyl-L-lysine(out) = L-aspartyl-L-lysine(in)</text>
        <dbReference type="Rhea" id="RHEA:79411"/>
        <dbReference type="ChEBI" id="CHEBI:229953"/>
    </reaction>
</comment>
<comment type="catalytic activity">
    <reaction evidence="7">
        <text>L-alanyl-L-lysine(out) = L-alanyl-L-lysine(in)</text>
        <dbReference type="Rhea" id="RHEA:79415"/>
        <dbReference type="ChEBI" id="CHEBI:192470"/>
    </reaction>
</comment>
<comment type="catalytic activity">
    <reaction evidence="7">
        <text>L-lysyl-L-alpha-amino acid(out) = L-lysyl-L-alpha-amino acid(in)</text>
        <dbReference type="Rhea" id="RHEA:79387"/>
        <dbReference type="ChEBI" id="CHEBI:229965"/>
    </reaction>
</comment>
<comment type="catalytic activity">
    <reaction evidence="7">
        <text>L-lysyl-L-alanine(out) = L-lysyl-L-alanine(in)</text>
        <dbReference type="Rhea" id="RHEA:79399"/>
        <dbReference type="ChEBI" id="CHEBI:229954"/>
    </reaction>
</comment>
<comment type="catalytic activity">
    <reaction evidence="7">
        <text>L-lysyl-L-lysine(out) = L-lysyl-L-lysine(in)</text>
        <dbReference type="Rhea" id="RHEA:79403"/>
        <dbReference type="ChEBI" id="CHEBI:229956"/>
    </reaction>
</comment>
<comment type="catalytic activity">
    <reaction evidence="7">
        <text>L-lysyl-glycine(out) = L-lysyl-glycine(in)</text>
        <dbReference type="Rhea" id="RHEA:79407"/>
        <dbReference type="ChEBI" id="CHEBI:191202"/>
    </reaction>
</comment>
<comment type="catalytic activity">
    <reaction evidence="7">
        <text>L-alpha-aminoacyl-L-histidine(out) = L-alpha-aminoacyl-L-histidine(in)</text>
        <dbReference type="Rhea" id="RHEA:79375"/>
        <dbReference type="ChEBI" id="CHEBI:229967"/>
    </reaction>
</comment>
<comment type="catalytic activity">
    <reaction evidence="7">
        <text>L-histidyl-L-alpha-amino acid(out) = L-histidyl-L-alpha-amino acid(in)</text>
        <dbReference type="Rhea" id="RHEA:79379"/>
        <dbReference type="ChEBI" id="CHEBI:229964"/>
    </reaction>
</comment>
<comment type="catalytic activity">
    <reaction evidence="7">
        <text>L-histidyl-glycine(out) = L-histidyl-glycine(in)</text>
        <dbReference type="Rhea" id="RHEA:79395"/>
        <dbReference type="ChEBI" id="CHEBI:229957"/>
    </reaction>
</comment>
<comment type="biophysicochemical properties">
    <kinetics>
        <KM evidence="7">4.11 mM for the L-lysyl-L-lysine dipeptide</KM>
    </kinetics>
</comment>
<comment type="subunit">
    <text evidence="1">Homodimer. Interacts with lysosomal protein GLMP (via lumenal domain); the interaction starts while both proteins are still in the endoplasmic reticulum and is required for stabilization of MFSD1 in lysosomes but has no direct effect on its targeting to lysosomes or transporter activity.</text>
</comment>
<comment type="subcellular location">
    <subcellularLocation>
        <location evidence="7">Lysosome membrane</location>
        <topology evidence="2">Multi-pass membrane protein</topology>
    </subcellularLocation>
    <text evidence="6">Also detected in Golgi when overexpressed.</text>
</comment>
<comment type="alternative products">
    <event type="alternative splicing"/>
    <isoform>
        <id>Q9H3U5-1</id>
        <name>1</name>
        <sequence type="displayed"/>
    </isoform>
    <isoform>
        <id>Q9H3U5-2</id>
        <name>2</name>
        <sequence type="described" ref="VSP_022537 VSP_022538"/>
    </isoform>
    <isoform>
        <id>Q9H3U5-3</id>
        <name>3</name>
        <sequence type="described" ref="VSP_037579"/>
    </isoform>
    <isoform>
        <id>Q9H3U5-4</id>
        <name>4</name>
        <sequence type="described" ref="VSP_037578"/>
    </isoform>
    <isoform>
        <id>Q9H3U5-5</id>
        <name>5</name>
        <sequence type="described" ref="VSP_047667 VSP_047668"/>
    </isoform>
    <isoform>
        <id>Q9H3U5-6</id>
        <name>6</name>
        <sequence type="described" ref="VSP_047667"/>
    </isoform>
</comment>
<comment type="domain">
    <text evidence="1">The dileucine internalization motif is required for lysosomal localization.</text>
</comment>
<comment type="miscellaneous">
    <molecule>Isoform 2</molecule>
    <text evidence="11">May be produced at very low levels due to a premature stop codon in the mRNA, leading to nonsense-mediated mRNA decay.</text>
</comment>
<comment type="similarity">
    <text evidence="11">Belongs to the major facilitator superfamily.</text>
</comment>
<comment type="sequence caution" evidence="11">
    <conflict type="erroneous translation">
        <sequence resource="EMBL-CDS" id="AAH30542"/>
    </conflict>
    <text>Wrong choice of CDS.</text>
</comment>
<comment type="sequence caution" evidence="11">
    <conflict type="miscellaneous discrepancy">
        <sequence resource="EMBL-CDS" id="AAN76517"/>
    </conflict>
    <text>Aberrant splicing.</text>
</comment>
<comment type="sequence caution" evidence="11">
    <conflict type="frameshift">
        <sequence resource="EMBL-CDS" id="BAB20269"/>
    </conflict>
</comment>
<comment type="sequence caution" evidence="11">
    <conflict type="erroneous translation">
        <sequence resource="EMBL-CDS" id="BAG57809"/>
    </conflict>
    <text>Wrong choice of CDS.</text>
</comment>
<comment type="sequence caution" evidence="11">
    <conflict type="erroneous initiation">
        <sequence resource="EMBL-CDS" id="BAG59980"/>
    </conflict>
</comment>
<keyword id="KW-0025">Alternative splicing</keyword>
<keyword id="KW-0458">Lysosome</keyword>
<keyword id="KW-0472">Membrane</keyword>
<keyword id="KW-1267">Proteomics identification</keyword>
<keyword id="KW-1185">Reference proteome</keyword>
<keyword id="KW-0812">Transmembrane</keyword>
<keyword id="KW-1133">Transmembrane helix</keyword>
<keyword id="KW-0813">Transport</keyword>
<protein>
    <recommendedName>
        <fullName evidence="12">Lysosomal dipeptide transporter MFSD1</fullName>
    </recommendedName>
    <alternativeName>
        <fullName evidence="13">Major facilitator superfamily domain-containing protein 1</fullName>
    </alternativeName>
    <alternativeName>
        <fullName evidence="10">Smooth muscle cell-associated protein 4</fullName>
        <shortName evidence="10">SMAP-4</shortName>
    </alternativeName>
</protein>
<organism>
    <name type="scientific">Homo sapiens</name>
    <name type="common">Human</name>
    <dbReference type="NCBI Taxonomy" id="9606"/>
    <lineage>
        <taxon>Eukaryota</taxon>
        <taxon>Metazoa</taxon>
        <taxon>Chordata</taxon>
        <taxon>Craniata</taxon>
        <taxon>Vertebrata</taxon>
        <taxon>Euteleostomi</taxon>
        <taxon>Mammalia</taxon>
        <taxon>Eutheria</taxon>
        <taxon>Euarchontoglires</taxon>
        <taxon>Primates</taxon>
        <taxon>Haplorrhini</taxon>
        <taxon>Catarrhini</taxon>
        <taxon>Hominidae</taxon>
        <taxon>Homo</taxon>
    </lineage>
</organism>
<evidence type="ECO:0000250" key="1">
    <source>
        <dbReference type="UniProtKB" id="Q9DC37"/>
    </source>
</evidence>
<evidence type="ECO:0000255" key="2"/>
<evidence type="ECO:0000256" key="3">
    <source>
        <dbReference type="SAM" id="MobiDB-lite"/>
    </source>
</evidence>
<evidence type="ECO:0000269" key="4">
    <source>
    </source>
</evidence>
<evidence type="ECO:0000269" key="5">
    <source>
    </source>
</evidence>
<evidence type="ECO:0000269" key="6">
    <source>
    </source>
</evidence>
<evidence type="ECO:0000269" key="7">
    <source>
    </source>
</evidence>
<evidence type="ECO:0000303" key="8">
    <source>
    </source>
</evidence>
<evidence type="ECO:0000303" key="9">
    <source>
    </source>
</evidence>
<evidence type="ECO:0000303" key="10">
    <source ref="1"/>
</evidence>
<evidence type="ECO:0000305" key="11"/>
<evidence type="ECO:0000305" key="12">
    <source>
    </source>
</evidence>
<evidence type="ECO:0000312" key="13">
    <source>
        <dbReference type="HGNC" id="HGNC:25874"/>
    </source>
</evidence>
<proteinExistence type="evidence at protein level"/>
<sequence>MEEEDEEARALLAGGPDEADRGAPAAPGALPALCDPSRLAHRLLVLLLMCFLGFGSYFCYDNPAALQTQVKRDMQVNTTKFMLLYAWYSWPNVVLCFFGGFLIDRVFGIRWGTIIFSCFVCIGQVVFALGGIFNAFWLMEFGRFVFGIGGESLAVAQNTYAVSWFKGKELNLVFGLQLSMARIGSTVNMNLMGWLYSKIEALLGSAGHTTLGITLMIGGITCILSLICALALAYLDQRAERILHKEQGKTGEVIKLTDVKDFSLPLWLIFIICVCYYVAVFPFIGLGKVFFTEKFGFSSQAASAINSVVYVISAPMSPVFGLLVDKTGKNIIWVLCAVAATLVSHMMLAFTMWNPWIAMCLLGLSYSLLACALWPMVAFVVPEHQLGTAYGFMQSIQNLGLAIISIIAGMILDSRGYLFLEVFFIACVSLSLLSVVLLYLVNRAQGGNLNYSARQREEIKFSHTE</sequence>
<feature type="chain" id="PRO_0000273382" description="Lysosomal dipeptide transporter MFSD1">
    <location>
        <begin position="1"/>
        <end position="465"/>
    </location>
</feature>
<feature type="transmembrane region" description="Helical" evidence="2">
    <location>
        <begin position="39"/>
        <end position="59"/>
    </location>
</feature>
<feature type="transmembrane region" description="Helical" evidence="2">
    <location>
        <begin position="83"/>
        <end position="103"/>
    </location>
</feature>
<feature type="transmembrane region" description="Helical" evidence="2">
    <location>
        <begin position="113"/>
        <end position="133"/>
    </location>
</feature>
<feature type="transmembrane region" description="Helical" evidence="2">
    <location>
        <begin position="135"/>
        <end position="155"/>
    </location>
</feature>
<feature type="transmembrane region" description="Helical" evidence="2">
    <location>
        <begin position="170"/>
        <end position="191"/>
    </location>
</feature>
<feature type="transmembrane region" description="Helical" evidence="2">
    <location>
        <begin position="213"/>
        <end position="233"/>
    </location>
</feature>
<feature type="transmembrane region" description="Helical" evidence="2">
    <location>
        <begin position="266"/>
        <end position="286"/>
    </location>
</feature>
<feature type="transmembrane region" description="Helical" evidence="2">
    <location>
        <begin position="303"/>
        <end position="323"/>
    </location>
</feature>
<feature type="transmembrane region" description="Helical" evidence="2">
    <location>
        <begin position="331"/>
        <end position="351"/>
    </location>
</feature>
<feature type="transmembrane region" description="Helical" evidence="2">
    <location>
        <begin position="361"/>
        <end position="381"/>
    </location>
</feature>
<feature type="transmembrane region" description="Helical" evidence="2">
    <location>
        <begin position="392"/>
        <end position="412"/>
    </location>
</feature>
<feature type="transmembrane region" description="Helical" evidence="2">
    <location>
        <begin position="418"/>
        <end position="438"/>
    </location>
</feature>
<feature type="region of interest" description="Disordered" evidence="3">
    <location>
        <begin position="1"/>
        <end position="23"/>
    </location>
</feature>
<feature type="short sequence motif" description="Dileucine internalization motif" evidence="7">
    <location>
        <begin position="11"/>
        <end position="12"/>
    </location>
</feature>
<feature type="splice variant" id="VSP_037578" description="In isoform 4." evidence="8">
    <location>
        <begin position="1"/>
        <end position="73"/>
    </location>
</feature>
<feature type="splice variant" id="VSP_047667" description="In isoform 5 and isoform 6." evidence="11">
    <original>M</original>
    <variation>MGVALRDLPGRHVSSRSHVTAVLTVFHGRCFLPGFGVVTTFPSPSPAGAM</variation>
    <location>
        <position position="1"/>
    </location>
</feature>
<feature type="splice variant" id="VSP_037579" description="In isoform 3." evidence="8">
    <original>GSYFCYDNPAALQTQVKRDMQVNTTKFMLLYAWYSWPNVVLCFFGGFLIDRVFGIR</original>
    <variation>AIFAMIILLPFRLKLDE</variation>
    <location>
        <begin position="55"/>
        <end position="110"/>
    </location>
</feature>
<feature type="splice variant" id="VSP_047668" description="In isoform 5." evidence="11">
    <original>GSYFCYDNPAALQTQVKRDMQVNTTKFMLLYAWYSWPNVVLCFFGGFLIDRVFGIR</original>
    <variation>AIFAMIILLPFRLKLNE</variation>
    <location>
        <begin position="55"/>
        <end position="110"/>
    </location>
</feature>
<feature type="splice variant" id="VSP_022537" description="In isoform 2." evidence="8 9">
    <original>DMQVNT</original>
    <variation>MGHNHF</variation>
    <location>
        <begin position="73"/>
        <end position="78"/>
    </location>
</feature>
<feature type="splice variant" id="VSP_022538" description="In isoform 2." evidence="8 9">
    <location>
        <begin position="79"/>
        <end position="465"/>
    </location>
</feature>
<feature type="sequence variant" id="VAR_030138" description="In dbSNP:rs28364680." evidence="4">
    <original>P</original>
    <variation>S</variation>
    <location>
        <position position="24"/>
    </location>
</feature>
<feature type="sequence variant" id="VAR_030139" description="In dbSNP:rs17854200." evidence="5">
    <original>K</original>
    <variation>E</variation>
    <location>
        <position position="168"/>
    </location>
</feature>
<feature type="sequence variant" id="VAR_030140" description="In dbSNP:rs3765083." evidence="4 5">
    <original>I</original>
    <variation>V</variation>
    <location>
        <position position="220"/>
    </location>
</feature>
<feature type="sequence variant" id="VAR_059466" description="In dbSNP:rs11551240.">
    <original>I</original>
    <variation>T</variation>
    <location>
        <position position="271"/>
    </location>
</feature>
<feature type="mutagenesis site" description="Loss of localization to lysosome. Localizes to plasma membrane." evidence="7">
    <original>LL</original>
    <variation>AA</variation>
    <location>
        <begin position="11"/>
        <end position="12"/>
    </location>
</feature>
<feature type="sequence conflict" description="In Ref. 1; BAB20269." evidence="11" ref="1">
    <original>C</original>
    <variation>R</variation>
    <location>
        <position position="275"/>
    </location>
</feature>
<dbReference type="EMBL" id="AB014732">
    <property type="protein sequence ID" value="BAB20269.1"/>
    <property type="status" value="ALT_FRAME"/>
    <property type="molecule type" value="mRNA"/>
</dbReference>
<dbReference type="EMBL" id="AF351617">
    <property type="protein sequence ID" value="AAN76517.2"/>
    <property type="status" value="ALT_SEQ"/>
    <property type="molecule type" value="mRNA"/>
</dbReference>
<dbReference type="EMBL" id="AK024215">
    <property type="protein sequence ID" value="BAB14852.1"/>
    <property type="molecule type" value="mRNA"/>
</dbReference>
<dbReference type="EMBL" id="AK294628">
    <property type="protein sequence ID" value="BAG57809.1"/>
    <property type="status" value="ALT_SEQ"/>
    <property type="molecule type" value="mRNA"/>
</dbReference>
<dbReference type="EMBL" id="AK297593">
    <property type="protein sequence ID" value="BAG59980.1"/>
    <property type="status" value="ALT_INIT"/>
    <property type="molecule type" value="mRNA"/>
</dbReference>
<dbReference type="EMBL" id="AK300497">
    <property type="protein sequence ID" value="BAG62211.1"/>
    <property type="molecule type" value="mRNA"/>
</dbReference>
<dbReference type="EMBL" id="AK301680">
    <property type="protein sequence ID" value="BAG63153.1"/>
    <property type="molecule type" value="mRNA"/>
</dbReference>
<dbReference type="EMBL" id="AC080013">
    <property type="status" value="NOT_ANNOTATED_CDS"/>
    <property type="molecule type" value="Genomic_DNA"/>
</dbReference>
<dbReference type="EMBL" id="AC128694">
    <property type="status" value="NOT_ANNOTATED_CDS"/>
    <property type="molecule type" value="Genomic_DNA"/>
</dbReference>
<dbReference type="EMBL" id="BC030542">
    <property type="protein sequence ID" value="AAH30542.1"/>
    <property type="status" value="ALT_SEQ"/>
    <property type="molecule type" value="mRNA"/>
</dbReference>
<dbReference type="EMBL" id="BC042197">
    <property type="protein sequence ID" value="AAH42197.1"/>
    <property type="molecule type" value="mRNA"/>
</dbReference>
<dbReference type="CCDS" id="CCDS3185.3">
    <molecule id="Q9H3U5-1"/>
</dbReference>
<dbReference type="CCDS" id="CCDS54666.2">
    <molecule id="Q9H3U5-3"/>
</dbReference>
<dbReference type="RefSeq" id="NP_001161375.1">
    <property type="nucleotide sequence ID" value="NM_001167903.1"/>
</dbReference>
<dbReference type="RefSeq" id="NP_001276335.1">
    <property type="nucleotide sequence ID" value="NM_001289406.1"/>
</dbReference>
<dbReference type="RefSeq" id="NP_001276336.1">
    <molecule id="Q9H3U5-4"/>
    <property type="nucleotide sequence ID" value="NM_001289407.3"/>
</dbReference>
<dbReference type="RefSeq" id="NP_073573.3">
    <molecule id="Q9H3U5-1"/>
    <property type="nucleotide sequence ID" value="NM_022736.4"/>
</dbReference>
<dbReference type="RefSeq" id="XP_006713793.1">
    <property type="nucleotide sequence ID" value="XM_006713730.2"/>
</dbReference>
<dbReference type="SMR" id="Q9H3U5"/>
<dbReference type="BioGRID" id="122263">
    <property type="interactions" value="7"/>
</dbReference>
<dbReference type="FunCoup" id="Q9H3U5">
    <property type="interactions" value="1025"/>
</dbReference>
<dbReference type="IntAct" id="Q9H3U5">
    <property type="interactions" value="2"/>
</dbReference>
<dbReference type="STRING" id="9606.ENSP00000484175"/>
<dbReference type="GlyGen" id="Q9H3U5">
    <property type="glycosylation" value="1 site, 1 O-linked glycan (1 site)"/>
</dbReference>
<dbReference type="iPTMnet" id="Q9H3U5"/>
<dbReference type="PhosphoSitePlus" id="Q9H3U5"/>
<dbReference type="SwissPalm" id="Q9H3U5"/>
<dbReference type="BioMuta" id="MFSD1"/>
<dbReference type="DMDM" id="124015158"/>
<dbReference type="jPOST" id="Q9H3U5"/>
<dbReference type="MassIVE" id="Q9H3U5"/>
<dbReference type="PaxDb" id="9606-ENSP00000403117"/>
<dbReference type="PeptideAtlas" id="Q9H3U5"/>
<dbReference type="ProteomicsDB" id="11457"/>
<dbReference type="ProteomicsDB" id="80759">
    <molecule id="Q9H3U5-1"/>
</dbReference>
<dbReference type="ProteomicsDB" id="80760">
    <molecule id="Q9H3U5-2"/>
</dbReference>
<dbReference type="ProteomicsDB" id="80761">
    <molecule id="Q9H3U5-3"/>
</dbReference>
<dbReference type="ProteomicsDB" id="80762">
    <molecule id="Q9H3U5-4"/>
</dbReference>
<dbReference type="Pumba" id="Q9H3U5"/>
<dbReference type="Antibodypedia" id="54152">
    <property type="antibodies" value="86 antibodies from 25 providers"/>
</dbReference>
<dbReference type="DNASU" id="64747"/>
<dbReference type="Ensembl" id="ENST00000264266.12">
    <molecule id="Q9H3U5-1"/>
    <property type="protein sequence ID" value="ENSP00000264266.5"/>
    <property type="gene ID" value="ENSG00000118855.21"/>
</dbReference>
<dbReference type="Ensembl" id="ENST00000392813.8">
    <molecule id="Q9H3U5-5"/>
    <property type="protein sequence ID" value="ENSP00000376560.4"/>
    <property type="gene ID" value="ENSG00000118855.21"/>
</dbReference>
<dbReference type="Ensembl" id="ENST00000415822.8">
    <molecule id="Q9H3U5-1"/>
    <property type="protein sequence ID" value="ENSP00000403117.3"/>
    <property type="gene ID" value="ENSG00000118855.21"/>
</dbReference>
<dbReference type="Ensembl" id="ENST00000480292.5">
    <molecule id="Q9H3U5-2"/>
    <property type="protein sequence ID" value="ENSP00000419467.2"/>
    <property type="gene ID" value="ENSG00000118855.21"/>
</dbReference>
<dbReference type="Ensembl" id="ENST00000484166.5">
    <molecule id="Q9H3U5-2"/>
    <property type="protein sequence ID" value="ENSP00000417950.2"/>
    <property type="gene ID" value="ENSG00000118855.21"/>
</dbReference>
<dbReference type="Ensembl" id="ENST00000622669.4">
    <molecule id="Q9H3U5-6"/>
    <property type="protein sequence ID" value="ENSP00000484175.1"/>
    <property type="gene ID" value="ENSG00000118855.21"/>
</dbReference>
<dbReference type="GeneID" id="64747"/>
<dbReference type="KEGG" id="hsa:64747"/>
<dbReference type="MANE-Select" id="ENST00000415822.8">
    <property type="protein sequence ID" value="ENSP00000403117.3"/>
    <property type="RefSeq nucleotide sequence ID" value="NM_022736.4"/>
    <property type="RefSeq protein sequence ID" value="NP_073573.3"/>
</dbReference>
<dbReference type="UCSC" id="uc003fcl.3">
    <molecule id="Q9H3U5-1"/>
    <property type="organism name" value="human"/>
</dbReference>
<dbReference type="AGR" id="HGNC:25874"/>
<dbReference type="CTD" id="64747"/>
<dbReference type="DisGeNET" id="64747"/>
<dbReference type="GeneCards" id="MFSD1"/>
<dbReference type="HGNC" id="HGNC:25874">
    <property type="gene designation" value="MFSD1"/>
</dbReference>
<dbReference type="HPA" id="ENSG00000118855">
    <property type="expression patterns" value="Low tissue specificity"/>
</dbReference>
<dbReference type="MIM" id="619976">
    <property type="type" value="gene"/>
</dbReference>
<dbReference type="neXtProt" id="NX_Q9H3U5"/>
<dbReference type="OpenTargets" id="ENSG00000118855"/>
<dbReference type="PharmGKB" id="PA134947356"/>
<dbReference type="VEuPathDB" id="HostDB:ENSG00000118855"/>
<dbReference type="eggNOG" id="KOG4686">
    <property type="taxonomic scope" value="Eukaryota"/>
</dbReference>
<dbReference type="GeneTree" id="ENSGT00390000011700"/>
<dbReference type="HOGENOM" id="CLU_2621386_0_0_1"/>
<dbReference type="InParanoid" id="Q9H3U5"/>
<dbReference type="OMA" id="CVLYYSA"/>
<dbReference type="OrthoDB" id="424834at2759"/>
<dbReference type="PAN-GO" id="Q9H3U5">
    <property type="GO annotations" value="1 GO annotation based on evolutionary models"/>
</dbReference>
<dbReference type="PhylomeDB" id="Q9H3U5"/>
<dbReference type="TreeFam" id="TF323603"/>
<dbReference type="PathwayCommons" id="Q9H3U5"/>
<dbReference type="BioGRID-ORCS" id="64747">
    <property type="hits" value="6 hits in 1155 CRISPR screens"/>
</dbReference>
<dbReference type="ChiTaRS" id="MFSD1">
    <property type="organism name" value="human"/>
</dbReference>
<dbReference type="GenomeRNAi" id="64747"/>
<dbReference type="Pharos" id="Q9H3U5">
    <property type="development level" value="Tdark"/>
</dbReference>
<dbReference type="PRO" id="PR:Q9H3U5"/>
<dbReference type="Proteomes" id="UP000005640">
    <property type="component" value="Chromosome 3"/>
</dbReference>
<dbReference type="RNAct" id="Q9H3U5">
    <property type="molecule type" value="protein"/>
</dbReference>
<dbReference type="Bgee" id="ENSG00000118855">
    <property type="expression patterns" value="Expressed in monocyte and 204 other cell types or tissues"/>
</dbReference>
<dbReference type="ExpressionAtlas" id="Q9H3U5">
    <property type="expression patterns" value="baseline and differential"/>
</dbReference>
<dbReference type="GO" id="GO:0005765">
    <property type="term" value="C:lysosomal membrane"/>
    <property type="evidence" value="ECO:0000314"/>
    <property type="project" value="UniProtKB"/>
</dbReference>
<dbReference type="GO" id="GO:0005764">
    <property type="term" value="C:lysosome"/>
    <property type="evidence" value="ECO:0000250"/>
    <property type="project" value="UniProtKB"/>
</dbReference>
<dbReference type="GO" id="GO:0160178">
    <property type="term" value="F:dipeptide uniporter activity"/>
    <property type="evidence" value="ECO:0000314"/>
    <property type="project" value="UniProtKB"/>
</dbReference>
<dbReference type="GO" id="GO:0042803">
    <property type="term" value="F:protein homodimerization activity"/>
    <property type="evidence" value="ECO:0000250"/>
    <property type="project" value="UniProtKB"/>
</dbReference>
<dbReference type="GO" id="GO:0141204">
    <property type="term" value="P:dipeptide transmembrane transport from lysosomal lumen to cytosol"/>
    <property type="evidence" value="ECO:0000314"/>
    <property type="project" value="UniProtKB"/>
</dbReference>
<dbReference type="GO" id="GO:0061462">
    <property type="term" value="P:protein localization to lysosome"/>
    <property type="evidence" value="ECO:0000250"/>
    <property type="project" value="UniProtKB"/>
</dbReference>
<dbReference type="GO" id="GO:0050821">
    <property type="term" value="P:protein stabilization"/>
    <property type="evidence" value="ECO:0000250"/>
    <property type="project" value="UniProtKB"/>
</dbReference>
<dbReference type="CDD" id="cd17340">
    <property type="entry name" value="MFS_MFSD1"/>
    <property type="match status" value="1"/>
</dbReference>
<dbReference type="Gene3D" id="1.20.1250.20">
    <property type="entry name" value="MFS general substrate transporter like domains"/>
    <property type="match status" value="2"/>
</dbReference>
<dbReference type="InterPro" id="IPR011701">
    <property type="entry name" value="MFS"/>
</dbReference>
<dbReference type="InterPro" id="IPR020846">
    <property type="entry name" value="MFS_dom"/>
</dbReference>
<dbReference type="InterPro" id="IPR036259">
    <property type="entry name" value="MFS_trans_sf"/>
</dbReference>
<dbReference type="InterPro" id="IPR052187">
    <property type="entry name" value="MFSD1"/>
</dbReference>
<dbReference type="PANTHER" id="PTHR23512">
    <property type="entry name" value="MAJOR FACILITATOR SUPERFAMILY DOMAIN-CONTAINING PROTEIN 1"/>
    <property type="match status" value="1"/>
</dbReference>
<dbReference type="PANTHER" id="PTHR23512:SF3">
    <property type="entry name" value="MAJOR FACILITATOR SUPERFAMILY DOMAIN-CONTAINING PROTEIN 1"/>
    <property type="match status" value="1"/>
</dbReference>
<dbReference type="Pfam" id="PF07690">
    <property type="entry name" value="MFS_1"/>
    <property type="match status" value="1"/>
</dbReference>
<dbReference type="SUPFAM" id="SSF103473">
    <property type="entry name" value="MFS general substrate transporter"/>
    <property type="match status" value="1"/>
</dbReference>
<dbReference type="PROSITE" id="PS50850">
    <property type="entry name" value="MFS"/>
    <property type="match status" value="1"/>
</dbReference>